<comment type="function">
    <text evidence="1">With LigD forms a non-homologous end joining (NHEJ) DNA repair enzyme, which repairs dsDNA breaks with reduced fidelity. Binds linear dsDNA with 5'- and 3'- overhangs but not closed circular dsDNA nor ssDNA. Recruits and stimulates the ligase activity of LigD.</text>
</comment>
<comment type="subunit">
    <text evidence="1">Homodimer. Interacts with LigD.</text>
</comment>
<comment type="similarity">
    <text evidence="1">Belongs to the prokaryotic Ku family.</text>
</comment>
<evidence type="ECO:0000255" key="1">
    <source>
        <dbReference type="HAMAP-Rule" id="MF_01875"/>
    </source>
</evidence>
<evidence type="ECO:0000256" key="2">
    <source>
        <dbReference type="SAM" id="MobiDB-lite"/>
    </source>
</evidence>
<protein>
    <recommendedName>
        <fullName evidence="1">Non-homologous end joining protein Ku</fullName>
    </recommendedName>
</protein>
<sequence length="296" mass="32415">MARAIWSGALTFGLVNIPVKLYTAVHQKEVRFHMLHDADGARIQLRRFCSTEEKEVPYEHIVKGYEVSPGRYVTVTREELEAFDPKATRTVEIHDFVELSEIDPAFFEASYYLVPDRSAAKAYRLLGDAMRKAGKVAIATAVLRTRESLCCVRPAAGGALALSTMNRADEIDSPGSLELPEAGEPSSRELQMAEQLVASLSGPFEPERYPDLRRERVLELIERKAEGQAIEAPAAEPAGAEVVSLADALSASLAAARRRGDEHEAPARGERRHAAAAAARTTGRPRAARASRKKRG</sequence>
<reference key="1">
    <citation type="submission" date="2008-08" db="EMBL/GenBank/DDBJ databases">
        <title>Complete sequence of Anaeromyxobacter sp. K.</title>
        <authorList>
            <consortium name="US DOE Joint Genome Institute"/>
            <person name="Lucas S."/>
            <person name="Copeland A."/>
            <person name="Lapidus A."/>
            <person name="Glavina del Rio T."/>
            <person name="Dalin E."/>
            <person name="Tice H."/>
            <person name="Bruce D."/>
            <person name="Goodwin L."/>
            <person name="Pitluck S."/>
            <person name="Saunders E."/>
            <person name="Brettin T."/>
            <person name="Detter J.C."/>
            <person name="Han C."/>
            <person name="Larimer F."/>
            <person name="Land M."/>
            <person name="Hauser L."/>
            <person name="Kyrpides N."/>
            <person name="Ovchinnikiva G."/>
            <person name="Beliaev A."/>
        </authorList>
    </citation>
    <scope>NUCLEOTIDE SEQUENCE [LARGE SCALE GENOMIC DNA]</scope>
    <source>
        <strain>K</strain>
    </source>
</reference>
<accession>B4UFZ1</accession>
<feature type="chain" id="PRO_0000389174" description="Non-homologous end joining protein Ku">
    <location>
        <begin position="1"/>
        <end position="296"/>
    </location>
</feature>
<feature type="domain" description="Ku" evidence="1">
    <location>
        <begin position="11"/>
        <end position="187"/>
    </location>
</feature>
<feature type="region of interest" description="Disordered" evidence="2">
    <location>
        <begin position="254"/>
        <end position="296"/>
    </location>
</feature>
<feature type="compositionally biased region" description="Basic and acidic residues" evidence="2">
    <location>
        <begin position="258"/>
        <end position="273"/>
    </location>
</feature>
<feature type="compositionally biased region" description="Low complexity" evidence="2">
    <location>
        <begin position="275"/>
        <end position="285"/>
    </location>
</feature>
<feature type="compositionally biased region" description="Basic residues" evidence="2">
    <location>
        <begin position="286"/>
        <end position="296"/>
    </location>
</feature>
<proteinExistence type="inferred from homology"/>
<organism>
    <name type="scientific">Anaeromyxobacter sp. (strain K)</name>
    <dbReference type="NCBI Taxonomy" id="447217"/>
    <lineage>
        <taxon>Bacteria</taxon>
        <taxon>Pseudomonadati</taxon>
        <taxon>Myxococcota</taxon>
        <taxon>Myxococcia</taxon>
        <taxon>Myxococcales</taxon>
        <taxon>Cystobacterineae</taxon>
        <taxon>Anaeromyxobacteraceae</taxon>
        <taxon>Anaeromyxobacter</taxon>
    </lineage>
</organism>
<dbReference type="EMBL" id="CP001131">
    <property type="protein sequence ID" value="ACG72259.1"/>
    <property type="molecule type" value="Genomic_DNA"/>
</dbReference>
<dbReference type="RefSeq" id="WP_012525086.1">
    <property type="nucleotide sequence ID" value="NC_011145.1"/>
</dbReference>
<dbReference type="KEGG" id="ank:AnaeK_1024"/>
<dbReference type="HOGENOM" id="CLU_048975_0_1_7"/>
<dbReference type="OrthoDB" id="9795084at2"/>
<dbReference type="Proteomes" id="UP000001871">
    <property type="component" value="Chromosome"/>
</dbReference>
<dbReference type="GO" id="GO:0003690">
    <property type="term" value="F:double-stranded DNA binding"/>
    <property type="evidence" value="ECO:0007669"/>
    <property type="project" value="UniProtKB-UniRule"/>
</dbReference>
<dbReference type="GO" id="GO:0006310">
    <property type="term" value="P:DNA recombination"/>
    <property type="evidence" value="ECO:0007669"/>
    <property type="project" value="UniProtKB-KW"/>
</dbReference>
<dbReference type="GO" id="GO:0006303">
    <property type="term" value="P:double-strand break repair via nonhomologous end joining"/>
    <property type="evidence" value="ECO:0007669"/>
    <property type="project" value="UniProtKB-UniRule"/>
</dbReference>
<dbReference type="CDD" id="cd00789">
    <property type="entry name" value="KU_like"/>
    <property type="match status" value="1"/>
</dbReference>
<dbReference type="Gene3D" id="2.40.290.10">
    <property type="match status" value="1"/>
</dbReference>
<dbReference type="HAMAP" id="MF_01875">
    <property type="entry name" value="Prokaryotic_Ku"/>
    <property type="match status" value="1"/>
</dbReference>
<dbReference type="InterPro" id="IPR006164">
    <property type="entry name" value="Ku70/Ku80_beta-barrel_dom"/>
</dbReference>
<dbReference type="InterPro" id="IPR009187">
    <property type="entry name" value="Prok_Ku"/>
</dbReference>
<dbReference type="InterPro" id="IPR016194">
    <property type="entry name" value="SPOC-like_C_dom_sf"/>
</dbReference>
<dbReference type="NCBIfam" id="TIGR02772">
    <property type="entry name" value="Ku_bact"/>
    <property type="match status" value="1"/>
</dbReference>
<dbReference type="PANTHER" id="PTHR41251">
    <property type="entry name" value="NON-HOMOLOGOUS END JOINING PROTEIN KU"/>
    <property type="match status" value="1"/>
</dbReference>
<dbReference type="PANTHER" id="PTHR41251:SF1">
    <property type="entry name" value="NON-HOMOLOGOUS END JOINING PROTEIN KU"/>
    <property type="match status" value="1"/>
</dbReference>
<dbReference type="Pfam" id="PF02735">
    <property type="entry name" value="Ku"/>
    <property type="match status" value="1"/>
</dbReference>
<dbReference type="PIRSF" id="PIRSF006493">
    <property type="entry name" value="Prok_Ku"/>
    <property type="match status" value="1"/>
</dbReference>
<dbReference type="SMART" id="SM00559">
    <property type="entry name" value="Ku78"/>
    <property type="match status" value="1"/>
</dbReference>
<dbReference type="SUPFAM" id="SSF100939">
    <property type="entry name" value="SPOC domain-like"/>
    <property type="match status" value="1"/>
</dbReference>
<gene>
    <name evidence="1" type="primary">ku</name>
    <name type="ordered locus">AnaeK_1024</name>
</gene>
<name>KU_ANASK</name>
<keyword id="KW-0227">DNA damage</keyword>
<keyword id="KW-0233">DNA recombination</keyword>
<keyword id="KW-0234">DNA repair</keyword>
<keyword id="KW-0238">DNA-binding</keyword>